<reference key="1">
    <citation type="journal article" date="2005" name="J. Bacteriol.">
        <title>Insights into genome plasticity and pathogenicity of the plant pathogenic Bacterium Xanthomonas campestris pv. vesicatoria revealed by the complete genome sequence.</title>
        <authorList>
            <person name="Thieme F."/>
            <person name="Koebnik R."/>
            <person name="Bekel T."/>
            <person name="Berger C."/>
            <person name="Boch J."/>
            <person name="Buettner D."/>
            <person name="Caldana C."/>
            <person name="Gaigalat L."/>
            <person name="Goesmann A."/>
            <person name="Kay S."/>
            <person name="Kirchner O."/>
            <person name="Lanz C."/>
            <person name="Linke B."/>
            <person name="McHardy A.C."/>
            <person name="Meyer F."/>
            <person name="Mittenhuber G."/>
            <person name="Nies D.H."/>
            <person name="Niesbach-Kloesgen U."/>
            <person name="Patschkowski T."/>
            <person name="Rueckert C."/>
            <person name="Rupp O."/>
            <person name="Schneiker S."/>
            <person name="Schuster S.C."/>
            <person name="Vorhoelter F.J."/>
            <person name="Weber E."/>
            <person name="Puehler A."/>
            <person name="Bonas U."/>
            <person name="Bartels D."/>
            <person name="Kaiser O."/>
        </authorList>
    </citation>
    <scope>NUCLEOTIDE SEQUENCE [LARGE SCALE GENOMIC DNA]</scope>
    <source>
        <strain>85-10</strain>
    </source>
</reference>
<proteinExistence type="inferred from homology"/>
<organism>
    <name type="scientific">Xanthomonas euvesicatoria pv. vesicatoria (strain 85-10)</name>
    <name type="common">Xanthomonas campestris pv. vesicatoria</name>
    <dbReference type="NCBI Taxonomy" id="316273"/>
    <lineage>
        <taxon>Bacteria</taxon>
        <taxon>Pseudomonadati</taxon>
        <taxon>Pseudomonadota</taxon>
        <taxon>Gammaproteobacteria</taxon>
        <taxon>Lysobacterales</taxon>
        <taxon>Lysobacteraceae</taxon>
        <taxon>Xanthomonas</taxon>
    </lineage>
</organism>
<accession>Q3BRP6</accession>
<sequence>MPTKSFHRTDRVSAQVRRDLGTIVHAAVRDHGLPSVSVSDVEISRDLAHAKVFVTALQQERSAEAVKGLKEIAGQLRTQLARAMKLRHVPELHFHYDDSVDRGERIDNLLRDLDDVGPEATSSDEDAEQR</sequence>
<keyword id="KW-0963">Cytoplasm</keyword>
<keyword id="KW-0690">Ribosome biogenesis</keyword>
<name>RBFA_XANE5</name>
<comment type="function">
    <text evidence="1">One of several proteins that assist in the late maturation steps of the functional core of the 30S ribosomal subunit. Associates with free 30S ribosomal subunits (but not with 30S subunits that are part of 70S ribosomes or polysomes). Required for efficient processing of 16S rRNA. May interact with the 5'-terminal helix region of 16S rRNA.</text>
</comment>
<comment type="subunit">
    <text evidence="1">Monomer. Binds 30S ribosomal subunits, but not 50S ribosomal subunits or 70S ribosomes.</text>
</comment>
<comment type="subcellular location">
    <subcellularLocation>
        <location evidence="1">Cytoplasm</location>
    </subcellularLocation>
</comment>
<comment type="similarity">
    <text evidence="1">Belongs to the RbfA family.</text>
</comment>
<protein>
    <recommendedName>
        <fullName evidence="1">Ribosome-binding factor A</fullName>
    </recommendedName>
</protein>
<gene>
    <name evidence="1" type="primary">rbfA</name>
    <name type="ordered locus">XCV2836</name>
</gene>
<evidence type="ECO:0000255" key="1">
    <source>
        <dbReference type="HAMAP-Rule" id="MF_00003"/>
    </source>
</evidence>
<evidence type="ECO:0000256" key="2">
    <source>
        <dbReference type="SAM" id="MobiDB-lite"/>
    </source>
</evidence>
<dbReference type="EMBL" id="AM039952">
    <property type="protein sequence ID" value="CAJ24515.1"/>
    <property type="molecule type" value="Genomic_DNA"/>
</dbReference>
<dbReference type="RefSeq" id="WP_005914265.1">
    <property type="nucleotide sequence ID" value="NZ_CP017190.1"/>
</dbReference>
<dbReference type="SMR" id="Q3BRP6"/>
<dbReference type="STRING" id="456327.BJD11_08695"/>
<dbReference type="GeneID" id="93991887"/>
<dbReference type="KEGG" id="xcv:XCV2836"/>
<dbReference type="eggNOG" id="COG0858">
    <property type="taxonomic scope" value="Bacteria"/>
</dbReference>
<dbReference type="HOGENOM" id="CLU_089475_6_3_6"/>
<dbReference type="Proteomes" id="UP000007069">
    <property type="component" value="Chromosome"/>
</dbReference>
<dbReference type="GO" id="GO:0005829">
    <property type="term" value="C:cytosol"/>
    <property type="evidence" value="ECO:0007669"/>
    <property type="project" value="TreeGrafter"/>
</dbReference>
<dbReference type="GO" id="GO:0043024">
    <property type="term" value="F:ribosomal small subunit binding"/>
    <property type="evidence" value="ECO:0007669"/>
    <property type="project" value="TreeGrafter"/>
</dbReference>
<dbReference type="GO" id="GO:0030490">
    <property type="term" value="P:maturation of SSU-rRNA"/>
    <property type="evidence" value="ECO:0007669"/>
    <property type="project" value="UniProtKB-UniRule"/>
</dbReference>
<dbReference type="FunFam" id="3.30.300.20:FF:000022">
    <property type="entry name" value="Ribosome-binding factor A"/>
    <property type="match status" value="1"/>
</dbReference>
<dbReference type="Gene3D" id="3.30.300.20">
    <property type="match status" value="1"/>
</dbReference>
<dbReference type="HAMAP" id="MF_00003">
    <property type="entry name" value="RbfA"/>
    <property type="match status" value="1"/>
</dbReference>
<dbReference type="InterPro" id="IPR015946">
    <property type="entry name" value="KH_dom-like_a/b"/>
</dbReference>
<dbReference type="InterPro" id="IPR000238">
    <property type="entry name" value="RbfA"/>
</dbReference>
<dbReference type="InterPro" id="IPR023799">
    <property type="entry name" value="RbfA_dom_sf"/>
</dbReference>
<dbReference type="InterPro" id="IPR020053">
    <property type="entry name" value="Ribosome-bd_factorA_CS"/>
</dbReference>
<dbReference type="NCBIfam" id="TIGR00082">
    <property type="entry name" value="rbfA"/>
    <property type="match status" value="1"/>
</dbReference>
<dbReference type="PANTHER" id="PTHR33515">
    <property type="entry name" value="RIBOSOME-BINDING FACTOR A, CHLOROPLASTIC-RELATED"/>
    <property type="match status" value="1"/>
</dbReference>
<dbReference type="PANTHER" id="PTHR33515:SF1">
    <property type="entry name" value="RIBOSOME-BINDING FACTOR A, CHLOROPLASTIC-RELATED"/>
    <property type="match status" value="1"/>
</dbReference>
<dbReference type="Pfam" id="PF02033">
    <property type="entry name" value="RBFA"/>
    <property type="match status" value="1"/>
</dbReference>
<dbReference type="SUPFAM" id="SSF89919">
    <property type="entry name" value="Ribosome-binding factor A, RbfA"/>
    <property type="match status" value="1"/>
</dbReference>
<dbReference type="PROSITE" id="PS01319">
    <property type="entry name" value="RBFA"/>
    <property type="match status" value="1"/>
</dbReference>
<feature type="chain" id="PRO_1000000245" description="Ribosome-binding factor A">
    <location>
        <begin position="1"/>
        <end position="130"/>
    </location>
</feature>
<feature type="region of interest" description="Disordered" evidence="2">
    <location>
        <begin position="111"/>
        <end position="130"/>
    </location>
</feature>